<gene>
    <name type="primary">fdxr</name>
</gene>
<reference key="1">
    <citation type="submission" date="2000-06" db="EMBL/GenBank/DDBJ databases">
        <title>Molecular cloning of adrenodoxin reductase from brook trout.</title>
        <authorList>
            <person name="Bobe J."/>
            <person name="Goetz F.W."/>
            <person name="Langenau D."/>
        </authorList>
    </citation>
    <scope>NUCLEOTIDE SEQUENCE [MRNA]</scope>
    <source>
        <tissue>Ovary</tissue>
    </source>
</reference>
<proteinExistence type="evidence at transcript level"/>
<name>ADRO_SALFO</name>
<sequence>MSTHKAALCKVQILKLFLISARCVRITRFYGVCGLSTSTPASSPKVCIVGGGPAGFYTAQHLVKTRTDVQVDIYERLPVPFGLVRFGVAPDHPEVKNVINTFTQTARHARCSFHGNVRVGKDVTVEELQEAYHAVVLSYGAEGNRTMGVPGEDLAGVYSAKDFVGWYNGLPRNRELRPDLSCETAVILGQGNVALDVARMLLSPVDILKKTDITQHALDALAESSVRRVLIVGRRGPLQVACTIKELREMVNLPGTRPEMEASEFEGIAETLKSLARPRKRLTELLLKAAIETPGEEELEKRNKAERAWGFRFLRRPLEVLPSTDLIRAAGIRLAVNRLEGDGEGVRAVATGEVEDVECGLVISSIGYKSLPIDPAVPFDGRKAIIPNTMGRVQQTAGLYCSGWVKRGPTGVIATTMNDSFDTARTLLQDIGKGTLDVSSVKPGSQGVSALLEKRGVKPVSFSDWEKIDSEETRRGETRGKPREKMLDVGEMLQVARA</sequence>
<keyword id="KW-0153">Cholesterol metabolism</keyword>
<keyword id="KW-0249">Electron transport</keyword>
<keyword id="KW-0274">FAD</keyword>
<keyword id="KW-0285">Flavoprotein</keyword>
<keyword id="KW-0443">Lipid metabolism</keyword>
<keyword id="KW-0472">Membrane</keyword>
<keyword id="KW-0496">Mitochondrion</keyword>
<keyword id="KW-0999">Mitochondrion inner membrane</keyword>
<keyword id="KW-0521">NADP</keyword>
<keyword id="KW-0560">Oxidoreductase</keyword>
<keyword id="KW-0753">Steroid metabolism</keyword>
<keyword id="KW-1207">Sterol metabolism</keyword>
<keyword id="KW-0809">Transit peptide</keyword>
<keyword id="KW-0813">Transport</keyword>
<feature type="transit peptide" description="Mitochondrion" evidence="1">
    <location>
        <begin position="1"/>
        <end position="37"/>
    </location>
</feature>
<feature type="chain" id="PRO_0000019423" description="NADPH:adrenodoxin oxidoreductase, mitochondrial">
    <location>
        <begin position="38"/>
        <end position="498"/>
    </location>
</feature>
<feature type="region of interest" description="Disordered" evidence="3">
    <location>
        <begin position="469"/>
        <end position="489"/>
    </location>
</feature>
<feature type="compositionally biased region" description="Basic and acidic residues" evidence="3">
    <location>
        <begin position="469"/>
        <end position="488"/>
    </location>
</feature>
<feature type="binding site" evidence="1">
    <location>
        <position position="54"/>
    </location>
    <ligand>
        <name>FAD</name>
        <dbReference type="ChEBI" id="CHEBI:57692"/>
    </ligand>
</feature>
<feature type="binding site" evidence="1">
    <location>
        <position position="75"/>
    </location>
    <ligand>
        <name>FAD</name>
        <dbReference type="ChEBI" id="CHEBI:57692"/>
    </ligand>
</feature>
<feature type="binding site" evidence="1">
    <location>
        <position position="83"/>
    </location>
    <ligand>
        <name>FAD</name>
        <dbReference type="ChEBI" id="CHEBI:57692"/>
    </ligand>
</feature>
<feature type="binding site" evidence="1">
    <location>
        <position position="119"/>
    </location>
    <ligand>
        <name>FAD</name>
        <dbReference type="ChEBI" id="CHEBI:57692"/>
    </ligand>
</feature>
<feature type="binding site" evidence="1">
    <location>
        <begin position="190"/>
        <end position="193"/>
    </location>
    <ligand>
        <name>NADP(+)</name>
        <dbReference type="ChEBI" id="CHEBI:58349"/>
    </ligand>
</feature>
<feature type="binding site" evidence="1">
    <location>
        <begin position="234"/>
        <end position="235"/>
    </location>
    <ligand>
        <name>NADP(+)</name>
        <dbReference type="ChEBI" id="CHEBI:58349"/>
    </ligand>
</feature>
<feature type="binding site" evidence="1">
    <location>
        <position position="246"/>
    </location>
    <ligand>
        <name>NADP(+)</name>
        <dbReference type="ChEBI" id="CHEBI:58349"/>
    </ligand>
</feature>
<feature type="binding site" evidence="1">
    <location>
        <position position="404"/>
    </location>
    <ligand>
        <name>FAD</name>
        <dbReference type="ChEBI" id="CHEBI:57692"/>
    </ligand>
</feature>
<feature type="binding site" evidence="1">
    <location>
        <begin position="411"/>
        <end position="413"/>
    </location>
    <ligand>
        <name>FAD</name>
        <dbReference type="ChEBI" id="CHEBI:57692"/>
    </ligand>
</feature>
<feature type="binding site" evidence="1">
    <location>
        <position position="411"/>
    </location>
    <ligand>
        <name>NADP(+)</name>
        <dbReference type="ChEBI" id="CHEBI:58349"/>
    </ligand>
</feature>
<evidence type="ECO:0000250" key="1">
    <source>
        <dbReference type="UniProtKB" id="P08165"/>
    </source>
</evidence>
<evidence type="ECO:0000250" key="2">
    <source>
        <dbReference type="UniProtKB" id="P48360"/>
    </source>
</evidence>
<evidence type="ECO:0000256" key="3">
    <source>
        <dbReference type="SAM" id="MobiDB-lite"/>
    </source>
</evidence>
<evidence type="ECO:0000305" key="4"/>
<accession>P82861</accession>
<organism>
    <name type="scientific">Salvelinus fontinalis</name>
    <name type="common">Brook trout</name>
    <name type="synonym">Salmo fontinalis</name>
    <dbReference type="NCBI Taxonomy" id="8038"/>
    <lineage>
        <taxon>Eukaryota</taxon>
        <taxon>Metazoa</taxon>
        <taxon>Chordata</taxon>
        <taxon>Craniata</taxon>
        <taxon>Vertebrata</taxon>
        <taxon>Euteleostomi</taxon>
        <taxon>Actinopterygii</taxon>
        <taxon>Neopterygii</taxon>
        <taxon>Teleostei</taxon>
        <taxon>Protacanthopterygii</taxon>
        <taxon>Salmoniformes</taxon>
        <taxon>Salmonidae</taxon>
        <taxon>Salmoninae</taxon>
        <taxon>Salvelinus</taxon>
    </lineage>
</organism>
<dbReference type="EC" id="1.18.1.6" evidence="1"/>
<dbReference type="EMBL" id="AF283287">
    <property type="protein sequence ID" value="AAG13948.1"/>
    <property type="molecule type" value="mRNA"/>
</dbReference>
<dbReference type="SMR" id="P82861"/>
<dbReference type="UniPathway" id="UPA00296"/>
<dbReference type="GO" id="GO:0005743">
    <property type="term" value="C:mitochondrial inner membrane"/>
    <property type="evidence" value="ECO:0007669"/>
    <property type="project" value="UniProtKB-SubCell"/>
</dbReference>
<dbReference type="GO" id="GO:0005739">
    <property type="term" value="C:mitochondrion"/>
    <property type="evidence" value="ECO:0000250"/>
    <property type="project" value="UniProtKB"/>
</dbReference>
<dbReference type="GO" id="GO:0016491">
    <property type="term" value="F:oxidoreductase activity"/>
    <property type="evidence" value="ECO:0007669"/>
    <property type="project" value="UniProtKB-KW"/>
</dbReference>
<dbReference type="GO" id="GO:0008203">
    <property type="term" value="P:cholesterol metabolic process"/>
    <property type="evidence" value="ECO:0007669"/>
    <property type="project" value="UniProtKB-UniPathway"/>
</dbReference>
<dbReference type="FunFam" id="3.50.50.60:FF:000036">
    <property type="entry name" value="NADPH:adrenodoxin oxidoreductase, mitochondrial"/>
    <property type="match status" value="1"/>
</dbReference>
<dbReference type="Gene3D" id="3.50.50.60">
    <property type="entry name" value="FAD/NAD(P)-binding domain"/>
    <property type="match status" value="1"/>
</dbReference>
<dbReference type="Gene3D" id="3.40.50.720">
    <property type="entry name" value="NAD(P)-binding Rossmann-like Domain"/>
    <property type="match status" value="1"/>
</dbReference>
<dbReference type="InterPro" id="IPR036188">
    <property type="entry name" value="FAD/NAD-bd_sf"/>
</dbReference>
<dbReference type="InterPro" id="IPR023753">
    <property type="entry name" value="FAD/NAD-binding_dom"/>
</dbReference>
<dbReference type="InterPro" id="IPR055275">
    <property type="entry name" value="Ferredox_Rdtase"/>
</dbReference>
<dbReference type="InterPro" id="IPR021163">
    <property type="entry name" value="Ferredox_Rdtase_adrenod"/>
</dbReference>
<dbReference type="PANTHER" id="PTHR48467">
    <property type="entry name" value="GLUTAMATE SYNTHASE 1 [NADH], CHLOROPLASTIC-LIKE"/>
    <property type="match status" value="1"/>
</dbReference>
<dbReference type="PANTHER" id="PTHR48467:SF1">
    <property type="entry name" value="GLUTAMATE SYNTHASE 1 [NADH], CHLOROPLASTIC-LIKE"/>
    <property type="match status" value="1"/>
</dbReference>
<dbReference type="Pfam" id="PF07992">
    <property type="entry name" value="Pyr_redox_2"/>
    <property type="match status" value="1"/>
</dbReference>
<dbReference type="PIRSF" id="PIRSF000362">
    <property type="entry name" value="FNR"/>
    <property type="match status" value="1"/>
</dbReference>
<dbReference type="PRINTS" id="PR00419">
    <property type="entry name" value="ADXRDTASE"/>
</dbReference>
<dbReference type="SUPFAM" id="SSF51971">
    <property type="entry name" value="Nucleotide-binding domain"/>
    <property type="match status" value="2"/>
</dbReference>
<protein>
    <recommendedName>
        <fullName>NADPH:adrenodoxin oxidoreductase, mitochondrial</fullName>
        <shortName>AR</shortName>
        <shortName>Adrenodoxin reductase</shortName>
        <ecNumber evidence="1">1.18.1.6</ecNumber>
    </recommendedName>
    <alternativeName>
        <fullName>Ferredoxin--NADP(+) reductase</fullName>
        <shortName>Ferredoxin reductase</shortName>
    </alternativeName>
</protein>
<comment type="function">
    <text evidence="1">Serves as the first electron transfer protein in all the mitochondrial P450 systems including cholesterol side chain cleavage in all steroidogenic tissues, steroid 11-beta hydroxylation in the adrenal cortex, 25-OH-vitamin D3-24 hydroxylation in the kidney, and sterol C-27 hydroxylation in the liver.</text>
</comment>
<comment type="catalytic activity">
    <reaction evidence="1">
        <text>2 reduced [adrenodoxin] + NADP(+) + H(+) = 2 oxidized [adrenodoxin] + NADPH</text>
        <dbReference type="Rhea" id="RHEA:42312"/>
        <dbReference type="Rhea" id="RHEA-COMP:9998"/>
        <dbReference type="Rhea" id="RHEA-COMP:9999"/>
        <dbReference type="ChEBI" id="CHEBI:15378"/>
        <dbReference type="ChEBI" id="CHEBI:33737"/>
        <dbReference type="ChEBI" id="CHEBI:33738"/>
        <dbReference type="ChEBI" id="CHEBI:57783"/>
        <dbReference type="ChEBI" id="CHEBI:58349"/>
        <dbReference type="EC" id="1.18.1.6"/>
    </reaction>
</comment>
<comment type="cofactor">
    <cofactor evidence="1">
        <name>FAD</name>
        <dbReference type="ChEBI" id="CHEBI:57692"/>
    </cofactor>
</comment>
<comment type="pathway">
    <text evidence="1">Steroid metabolism; cholesterol metabolism.</text>
</comment>
<comment type="subcellular location">
    <subcellularLocation>
        <location evidence="2">Mitochondrion inner membrane</location>
        <topology evidence="4">Peripheral membrane protein</topology>
    </subcellularLocation>
</comment>
<comment type="similarity">
    <text evidence="4">Belongs to the ferredoxin--NADP reductase type 1 family.</text>
</comment>